<sequence>MKFIVKLFPEIMMKSKPVRMRFTKMLETNIRNVLKKVDESAKVQRQWDKIMVMVPDDRPDLVEAFGERLACIPGIAHVLQVNVSTFTSVDDIYQQTLVAYKEQLVGKTFCVRVKRAGKHDFNSIEVERYVGGGLNQFTEAAGVRLKNPDMTVHLEIDNDNLYLIDKRIEGLGGFPMATQEDVLSLISGGFDSGVSSYQFIKRGSRTHYCFFNLGGDQHEIGVKQVAYHLWQKYGESHKVKFISVPFDPVVQEILERIDNGQMGVILKRMMMRAATRVAQKMGIQALVTGEAMGQVSSQTLTNLNVIDRCTEQLILRPLIAMDKQDIINLSRQIGTEDFAKSIPEYCGVISQKPTVKAVLSKVEAEEAKFSEDLLDRVIADAEIIDIREIATQMDTKITETETVDSINANEIIIDVRAPEEEEKSPLKIDGVEVKAIPFYKLATQFADLDKDKSYLLYCDRGVMSKLQALYLQEQGYTNVKVYRP</sequence>
<protein>
    <recommendedName>
        <fullName evidence="1">tRNA sulfurtransferase</fullName>
        <ecNumber evidence="1">2.8.1.4</ecNumber>
    </recommendedName>
    <alternativeName>
        <fullName evidence="1">Sulfur carrier protein ThiS sulfurtransferase</fullName>
    </alternativeName>
    <alternativeName>
        <fullName evidence="1">Thiamine biosynthesis protein ThiI</fullName>
    </alternativeName>
    <alternativeName>
        <fullName evidence="1">tRNA 4-thiouridine synthase</fullName>
    </alternativeName>
</protein>
<name>THII_SHEHH</name>
<accession>B0TQ31</accession>
<dbReference type="EC" id="2.8.1.4" evidence="1"/>
<dbReference type="EMBL" id="CP000931">
    <property type="protein sequence ID" value="ABZ77623.1"/>
    <property type="molecule type" value="Genomic_DNA"/>
</dbReference>
<dbReference type="RefSeq" id="WP_012278149.1">
    <property type="nucleotide sequence ID" value="NC_010334.1"/>
</dbReference>
<dbReference type="SMR" id="B0TQ31"/>
<dbReference type="STRING" id="458817.Shal_3075"/>
<dbReference type="KEGG" id="shl:Shal_3075"/>
<dbReference type="eggNOG" id="COG0301">
    <property type="taxonomic scope" value="Bacteria"/>
</dbReference>
<dbReference type="eggNOG" id="COG0607">
    <property type="taxonomic scope" value="Bacteria"/>
</dbReference>
<dbReference type="HOGENOM" id="CLU_037952_4_1_6"/>
<dbReference type="OrthoDB" id="9773948at2"/>
<dbReference type="UniPathway" id="UPA00060"/>
<dbReference type="Proteomes" id="UP000001317">
    <property type="component" value="Chromosome"/>
</dbReference>
<dbReference type="GO" id="GO:0005829">
    <property type="term" value="C:cytosol"/>
    <property type="evidence" value="ECO:0007669"/>
    <property type="project" value="TreeGrafter"/>
</dbReference>
<dbReference type="GO" id="GO:0005524">
    <property type="term" value="F:ATP binding"/>
    <property type="evidence" value="ECO:0007669"/>
    <property type="project" value="UniProtKB-UniRule"/>
</dbReference>
<dbReference type="GO" id="GO:0004810">
    <property type="term" value="F:CCA tRNA nucleotidyltransferase activity"/>
    <property type="evidence" value="ECO:0007669"/>
    <property type="project" value="InterPro"/>
</dbReference>
<dbReference type="GO" id="GO:0000049">
    <property type="term" value="F:tRNA binding"/>
    <property type="evidence" value="ECO:0007669"/>
    <property type="project" value="UniProtKB-UniRule"/>
</dbReference>
<dbReference type="GO" id="GO:0140741">
    <property type="term" value="F:tRNA-uracil-4 sulfurtransferase activity"/>
    <property type="evidence" value="ECO:0007669"/>
    <property type="project" value="UniProtKB-EC"/>
</dbReference>
<dbReference type="GO" id="GO:0009228">
    <property type="term" value="P:thiamine biosynthetic process"/>
    <property type="evidence" value="ECO:0007669"/>
    <property type="project" value="UniProtKB-KW"/>
</dbReference>
<dbReference type="GO" id="GO:0009229">
    <property type="term" value="P:thiamine diphosphate biosynthetic process"/>
    <property type="evidence" value="ECO:0007669"/>
    <property type="project" value="UniProtKB-UniRule"/>
</dbReference>
<dbReference type="GO" id="GO:0052837">
    <property type="term" value="P:thiazole biosynthetic process"/>
    <property type="evidence" value="ECO:0007669"/>
    <property type="project" value="InterPro"/>
</dbReference>
<dbReference type="GO" id="GO:0002937">
    <property type="term" value="P:tRNA 4-thiouridine biosynthesis"/>
    <property type="evidence" value="ECO:0007669"/>
    <property type="project" value="TreeGrafter"/>
</dbReference>
<dbReference type="CDD" id="cd01712">
    <property type="entry name" value="PPase_ThiI"/>
    <property type="match status" value="1"/>
</dbReference>
<dbReference type="CDD" id="cd00158">
    <property type="entry name" value="RHOD"/>
    <property type="match status" value="1"/>
</dbReference>
<dbReference type="CDD" id="cd11716">
    <property type="entry name" value="THUMP_ThiI"/>
    <property type="match status" value="1"/>
</dbReference>
<dbReference type="FunFam" id="3.30.2130.30:FF:000002">
    <property type="entry name" value="tRNA sulfurtransferase"/>
    <property type="match status" value="1"/>
</dbReference>
<dbReference type="FunFam" id="3.40.250.10:FF:000003">
    <property type="entry name" value="tRNA sulfurtransferase"/>
    <property type="match status" value="1"/>
</dbReference>
<dbReference type="FunFam" id="3.40.50.620:FF:000029">
    <property type="entry name" value="tRNA sulfurtransferase"/>
    <property type="match status" value="1"/>
</dbReference>
<dbReference type="Gene3D" id="3.30.2130.30">
    <property type="match status" value="1"/>
</dbReference>
<dbReference type="Gene3D" id="3.40.50.620">
    <property type="entry name" value="HUPs"/>
    <property type="match status" value="1"/>
</dbReference>
<dbReference type="Gene3D" id="3.40.250.10">
    <property type="entry name" value="Rhodanese-like domain"/>
    <property type="match status" value="1"/>
</dbReference>
<dbReference type="HAMAP" id="MF_00021">
    <property type="entry name" value="ThiI"/>
    <property type="match status" value="1"/>
</dbReference>
<dbReference type="InterPro" id="IPR001763">
    <property type="entry name" value="Rhodanese-like_dom"/>
</dbReference>
<dbReference type="InterPro" id="IPR036873">
    <property type="entry name" value="Rhodanese-like_dom_sf"/>
</dbReference>
<dbReference type="InterPro" id="IPR014729">
    <property type="entry name" value="Rossmann-like_a/b/a_fold"/>
</dbReference>
<dbReference type="InterPro" id="IPR020536">
    <property type="entry name" value="ThiI_AANH"/>
</dbReference>
<dbReference type="InterPro" id="IPR054173">
    <property type="entry name" value="ThiI_fer"/>
</dbReference>
<dbReference type="InterPro" id="IPR049961">
    <property type="entry name" value="ThiI_N"/>
</dbReference>
<dbReference type="InterPro" id="IPR026340">
    <property type="entry name" value="THII_Thiazole_biosynth_dom"/>
</dbReference>
<dbReference type="InterPro" id="IPR004114">
    <property type="entry name" value="THUMP_dom"/>
</dbReference>
<dbReference type="InterPro" id="IPR049962">
    <property type="entry name" value="THUMP_ThiI"/>
</dbReference>
<dbReference type="InterPro" id="IPR003720">
    <property type="entry name" value="tRNA_STrfase"/>
</dbReference>
<dbReference type="InterPro" id="IPR050102">
    <property type="entry name" value="tRNA_sulfurtransferase_ThiI"/>
</dbReference>
<dbReference type="NCBIfam" id="TIGR04271">
    <property type="entry name" value="ThiI_C_thiazole"/>
    <property type="match status" value="1"/>
</dbReference>
<dbReference type="NCBIfam" id="TIGR00342">
    <property type="entry name" value="tRNA uracil 4-sulfurtransferase ThiI"/>
    <property type="match status" value="1"/>
</dbReference>
<dbReference type="PANTHER" id="PTHR43209">
    <property type="entry name" value="TRNA SULFURTRANSFERASE"/>
    <property type="match status" value="1"/>
</dbReference>
<dbReference type="PANTHER" id="PTHR43209:SF1">
    <property type="entry name" value="TRNA SULFURTRANSFERASE"/>
    <property type="match status" value="1"/>
</dbReference>
<dbReference type="Pfam" id="PF00581">
    <property type="entry name" value="Rhodanese"/>
    <property type="match status" value="1"/>
</dbReference>
<dbReference type="Pfam" id="PF02568">
    <property type="entry name" value="ThiI"/>
    <property type="match status" value="1"/>
</dbReference>
<dbReference type="Pfam" id="PF22025">
    <property type="entry name" value="ThiI_fer"/>
    <property type="match status" value="1"/>
</dbReference>
<dbReference type="Pfam" id="PF02926">
    <property type="entry name" value="THUMP"/>
    <property type="match status" value="1"/>
</dbReference>
<dbReference type="SMART" id="SM00981">
    <property type="entry name" value="THUMP"/>
    <property type="match status" value="1"/>
</dbReference>
<dbReference type="SUPFAM" id="SSF52402">
    <property type="entry name" value="Adenine nucleotide alpha hydrolases-like"/>
    <property type="match status" value="1"/>
</dbReference>
<dbReference type="SUPFAM" id="SSF52821">
    <property type="entry name" value="Rhodanese/Cell cycle control phosphatase"/>
    <property type="match status" value="1"/>
</dbReference>
<dbReference type="SUPFAM" id="SSF143437">
    <property type="entry name" value="THUMP domain-like"/>
    <property type="match status" value="1"/>
</dbReference>
<dbReference type="PROSITE" id="PS50206">
    <property type="entry name" value="RHODANESE_3"/>
    <property type="match status" value="1"/>
</dbReference>
<dbReference type="PROSITE" id="PS51165">
    <property type="entry name" value="THUMP"/>
    <property type="match status" value="1"/>
</dbReference>
<organism>
    <name type="scientific">Shewanella halifaxensis (strain HAW-EB4)</name>
    <dbReference type="NCBI Taxonomy" id="458817"/>
    <lineage>
        <taxon>Bacteria</taxon>
        <taxon>Pseudomonadati</taxon>
        <taxon>Pseudomonadota</taxon>
        <taxon>Gammaproteobacteria</taxon>
        <taxon>Alteromonadales</taxon>
        <taxon>Shewanellaceae</taxon>
        <taxon>Shewanella</taxon>
    </lineage>
</organism>
<feature type="chain" id="PRO_1000074268" description="tRNA sulfurtransferase">
    <location>
        <begin position="1"/>
        <end position="484"/>
    </location>
</feature>
<feature type="domain" description="THUMP" evidence="1">
    <location>
        <begin position="63"/>
        <end position="167"/>
    </location>
</feature>
<feature type="domain" description="Rhodanese" evidence="1">
    <location>
        <begin position="406"/>
        <end position="484"/>
    </location>
</feature>
<feature type="active site" description="Cysteine persulfide intermediate" evidence="1">
    <location>
        <position position="458"/>
    </location>
</feature>
<feature type="binding site" evidence="1">
    <location>
        <begin position="185"/>
        <end position="186"/>
    </location>
    <ligand>
        <name>ATP</name>
        <dbReference type="ChEBI" id="CHEBI:30616"/>
    </ligand>
</feature>
<feature type="binding site" evidence="1">
    <location>
        <position position="267"/>
    </location>
    <ligand>
        <name>ATP</name>
        <dbReference type="ChEBI" id="CHEBI:30616"/>
    </ligand>
</feature>
<feature type="binding site" evidence="1">
    <location>
        <position position="289"/>
    </location>
    <ligand>
        <name>ATP</name>
        <dbReference type="ChEBI" id="CHEBI:30616"/>
    </ligand>
</feature>
<feature type="binding site" evidence="1">
    <location>
        <position position="298"/>
    </location>
    <ligand>
        <name>ATP</name>
        <dbReference type="ChEBI" id="CHEBI:30616"/>
    </ligand>
</feature>
<feature type="disulfide bond" description="Redox-active" evidence="1">
    <location>
        <begin position="346"/>
        <end position="458"/>
    </location>
</feature>
<keyword id="KW-0067">ATP-binding</keyword>
<keyword id="KW-0963">Cytoplasm</keyword>
<keyword id="KW-1015">Disulfide bond</keyword>
<keyword id="KW-0547">Nucleotide-binding</keyword>
<keyword id="KW-0676">Redox-active center</keyword>
<keyword id="KW-0694">RNA-binding</keyword>
<keyword id="KW-0784">Thiamine biosynthesis</keyword>
<keyword id="KW-0808">Transferase</keyword>
<keyword id="KW-0820">tRNA-binding</keyword>
<proteinExistence type="inferred from homology"/>
<gene>
    <name evidence="1" type="primary">thiI</name>
    <name type="ordered locus">Shal_3075</name>
</gene>
<evidence type="ECO:0000255" key="1">
    <source>
        <dbReference type="HAMAP-Rule" id="MF_00021"/>
    </source>
</evidence>
<reference key="1">
    <citation type="submission" date="2008-01" db="EMBL/GenBank/DDBJ databases">
        <title>Complete sequence of Shewanella halifaxensis HAW-EB4.</title>
        <authorList>
            <consortium name="US DOE Joint Genome Institute"/>
            <person name="Copeland A."/>
            <person name="Lucas S."/>
            <person name="Lapidus A."/>
            <person name="Glavina del Rio T."/>
            <person name="Dalin E."/>
            <person name="Tice H."/>
            <person name="Bruce D."/>
            <person name="Goodwin L."/>
            <person name="Pitluck S."/>
            <person name="Sims D."/>
            <person name="Brettin T."/>
            <person name="Detter J.C."/>
            <person name="Han C."/>
            <person name="Kuske C.R."/>
            <person name="Schmutz J."/>
            <person name="Larimer F."/>
            <person name="Land M."/>
            <person name="Hauser L."/>
            <person name="Kyrpides N."/>
            <person name="Kim E."/>
            <person name="Zhao J.-S."/>
            <person name="Richardson P."/>
        </authorList>
    </citation>
    <scope>NUCLEOTIDE SEQUENCE [LARGE SCALE GENOMIC DNA]</scope>
    <source>
        <strain>HAW-EB4</strain>
    </source>
</reference>
<comment type="function">
    <text evidence="1">Catalyzes the ATP-dependent transfer of a sulfur to tRNA to produce 4-thiouridine in position 8 of tRNAs, which functions as a near-UV photosensor. Also catalyzes the transfer of sulfur to the sulfur carrier protein ThiS, forming ThiS-thiocarboxylate. This is a step in the synthesis of thiazole, in the thiamine biosynthesis pathway. The sulfur is donated as persulfide by IscS.</text>
</comment>
<comment type="catalytic activity">
    <reaction evidence="1">
        <text>[ThiI sulfur-carrier protein]-S-sulfanyl-L-cysteine + a uridine in tRNA + 2 reduced [2Fe-2S]-[ferredoxin] + ATP + H(+) = [ThiI sulfur-carrier protein]-L-cysteine + a 4-thiouridine in tRNA + 2 oxidized [2Fe-2S]-[ferredoxin] + AMP + diphosphate</text>
        <dbReference type="Rhea" id="RHEA:24176"/>
        <dbReference type="Rhea" id="RHEA-COMP:10000"/>
        <dbReference type="Rhea" id="RHEA-COMP:10001"/>
        <dbReference type="Rhea" id="RHEA-COMP:13337"/>
        <dbReference type="Rhea" id="RHEA-COMP:13338"/>
        <dbReference type="Rhea" id="RHEA-COMP:13339"/>
        <dbReference type="Rhea" id="RHEA-COMP:13340"/>
        <dbReference type="ChEBI" id="CHEBI:15378"/>
        <dbReference type="ChEBI" id="CHEBI:29950"/>
        <dbReference type="ChEBI" id="CHEBI:30616"/>
        <dbReference type="ChEBI" id="CHEBI:33019"/>
        <dbReference type="ChEBI" id="CHEBI:33737"/>
        <dbReference type="ChEBI" id="CHEBI:33738"/>
        <dbReference type="ChEBI" id="CHEBI:61963"/>
        <dbReference type="ChEBI" id="CHEBI:65315"/>
        <dbReference type="ChEBI" id="CHEBI:136798"/>
        <dbReference type="ChEBI" id="CHEBI:456215"/>
        <dbReference type="EC" id="2.8.1.4"/>
    </reaction>
</comment>
<comment type="catalytic activity">
    <reaction evidence="1">
        <text>[ThiS sulfur-carrier protein]-C-terminal Gly-Gly-AMP + S-sulfanyl-L-cysteinyl-[cysteine desulfurase] + AH2 = [ThiS sulfur-carrier protein]-C-terminal-Gly-aminoethanethioate + L-cysteinyl-[cysteine desulfurase] + A + AMP + 2 H(+)</text>
        <dbReference type="Rhea" id="RHEA:43340"/>
        <dbReference type="Rhea" id="RHEA-COMP:12157"/>
        <dbReference type="Rhea" id="RHEA-COMP:12158"/>
        <dbReference type="Rhea" id="RHEA-COMP:12910"/>
        <dbReference type="Rhea" id="RHEA-COMP:19908"/>
        <dbReference type="ChEBI" id="CHEBI:13193"/>
        <dbReference type="ChEBI" id="CHEBI:15378"/>
        <dbReference type="ChEBI" id="CHEBI:17499"/>
        <dbReference type="ChEBI" id="CHEBI:29950"/>
        <dbReference type="ChEBI" id="CHEBI:61963"/>
        <dbReference type="ChEBI" id="CHEBI:90618"/>
        <dbReference type="ChEBI" id="CHEBI:232372"/>
        <dbReference type="ChEBI" id="CHEBI:456215"/>
    </reaction>
</comment>
<comment type="pathway">
    <text evidence="1">Cofactor biosynthesis; thiamine diphosphate biosynthesis.</text>
</comment>
<comment type="subcellular location">
    <subcellularLocation>
        <location evidence="1">Cytoplasm</location>
    </subcellularLocation>
</comment>
<comment type="similarity">
    <text evidence="1">Belongs to the ThiI family.</text>
</comment>